<name>LSPA_SHEB5</name>
<reference key="1">
    <citation type="submission" date="2007-02" db="EMBL/GenBank/DDBJ databases">
        <title>Complete sequence of chromosome of Shewanella baltica OS155.</title>
        <authorList>
            <consortium name="US DOE Joint Genome Institute"/>
            <person name="Copeland A."/>
            <person name="Lucas S."/>
            <person name="Lapidus A."/>
            <person name="Barry K."/>
            <person name="Detter J.C."/>
            <person name="Glavina del Rio T."/>
            <person name="Hammon N."/>
            <person name="Israni S."/>
            <person name="Dalin E."/>
            <person name="Tice H."/>
            <person name="Pitluck S."/>
            <person name="Sims D.R."/>
            <person name="Brettin T."/>
            <person name="Bruce D."/>
            <person name="Han C."/>
            <person name="Tapia R."/>
            <person name="Brainard J."/>
            <person name="Schmutz J."/>
            <person name="Larimer F."/>
            <person name="Land M."/>
            <person name="Hauser L."/>
            <person name="Kyrpides N."/>
            <person name="Mikhailova N."/>
            <person name="Brettar I."/>
            <person name="Klappenbach J."/>
            <person name="Konstantinidis K."/>
            <person name="Rodrigues J."/>
            <person name="Tiedje J."/>
            <person name="Richardson P."/>
        </authorList>
    </citation>
    <scope>NUCLEOTIDE SEQUENCE [LARGE SCALE GENOMIC DNA]</scope>
    <source>
        <strain>OS155 / ATCC BAA-1091</strain>
    </source>
</reference>
<gene>
    <name evidence="1" type="primary">lspA</name>
    <name type="ordered locus">Sbal_1055</name>
</gene>
<proteinExistence type="inferred from homology"/>
<sequence length="171" mass="19358">MPLTWKDSGLRWYWVAVLVFFADQLSKQWVLANFDLHESLNLLPFFNFTYVRNYGAAFSFLSDAGGWQRWLFTIVAVGFSTLLTVWLRRQSASLLKLNLAYTLVIGGALGNLVDRLMHGFVVDFIDFFWAKSHYPAFNIADSAICIGAVLIIWDAFLSGKSETDSAEGVKK</sequence>
<protein>
    <recommendedName>
        <fullName evidence="1">Lipoprotein signal peptidase</fullName>
        <ecNumber evidence="1">3.4.23.36</ecNumber>
    </recommendedName>
    <alternativeName>
        <fullName evidence="1">Prolipoprotein signal peptidase</fullName>
    </alternativeName>
    <alternativeName>
        <fullName evidence="1">Signal peptidase II</fullName>
        <shortName evidence="1">SPase II</shortName>
    </alternativeName>
</protein>
<evidence type="ECO:0000255" key="1">
    <source>
        <dbReference type="HAMAP-Rule" id="MF_00161"/>
    </source>
</evidence>
<organism>
    <name type="scientific">Shewanella baltica (strain OS155 / ATCC BAA-1091)</name>
    <dbReference type="NCBI Taxonomy" id="325240"/>
    <lineage>
        <taxon>Bacteria</taxon>
        <taxon>Pseudomonadati</taxon>
        <taxon>Pseudomonadota</taxon>
        <taxon>Gammaproteobacteria</taxon>
        <taxon>Alteromonadales</taxon>
        <taxon>Shewanellaceae</taxon>
        <taxon>Shewanella</taxon>
    </lineage>
</organism>
<feature type="chain" id="PRO_1000038822" description="Lipoprotein signal peptidase">
    <location>
        <begin position="1"/>
        <end position="171"/>
    </location>
</feature>
<feature type="transmembrane region" description="Helical" evidence="1">
    <location>
        <begin position="12"/>
        <end position="32"/>
    </location>
</feature>
<feature type="transmembrane region" description="Helical" evidence="1">
    <location>
        <begin position="67"/>
        <end position="87"/>
    </location>
</feature>
<feature type="transmembrane region" description="Helical" evidence="1">
    <location>
        <begin position="93"/>
        <end position="113"/>
    </location>
</feature>
<feature type="transmembrane region" description="Helical" evidence="1">
    <location>
        <begin position="137"/>
        <end position="157"/>
    </location>
</feature>
<feature type="active site" evidence="1">
    <location>
        <position position="123"/>
    </location>
</feature>
<feature type="active site" evidence="1">
    <location>
        <position position="141"/>
    </location>
</feature>
<accession>A3D1G6</accession>
<dbReference type="EC" id="3.4.23.36" evidence="1"/>
<dbReference type="EMBL" id="CP000563">
    <property type="protein sequence ID" value="ABN60579.1"/>
    <property type="molecule type" value="Genomic_DNA"/>
</dbReference>
<dbReference type="RefSeq" id="WP_011846081.1">
    <property type="nucleotide sequence ID" value="NC_009052.1"/>
</dbReference>
<dbReference type="SMR" id="A3D1G6"/>
<dbReference type="STRING" id="325240.Sbal_1055"/>
<dbReference type="MEROPS" id="A08.001"/>
<dbReference type="KEGG" id="sbl:Sbal_1055"/>
<dbReference type="HOGENOM" id="CLU_083252_4_0_6"/>
<dbReference type="OrthoDB" id="9810259at2"/>
<dbReference type="UniPathway" id="UPA00665"/>
<dbReference type="Proteomes" id="UP000001557">
    <property type="component" value="Chromosome"/>
</dbReference>
<dbReference type="GO" id="GO:0005886">
    <property type="term" value="C:plasma membrane"/>
    <property type="evidence" value="ECO:0007669"/>
    <property type="project" value="UniProtKB-SubCell"/>
</dbReference>
<dbReference type="GO" id="GO:0004190">
    <property type="term" value="F:aspartic-type endopeptidase activity"/>
    <property type="evidence" value="ECO:0007669"/>
    <property type="project" value="UniProtKB-UniRule"/>
</dbReference>
<dbReference type="GO" id="GO:0006508">
    <property type="term" value="P:proteolysis"/>
    <property type="evidence" value="ECO:0007669"/>
    <property type="project" value="UniProtKB-KW"/>
</dbReference>
<dbReference type="HAMAP" id="MF_00161">
    <property type="entry name" value="LspA"/>
    <property type="match status" value="1"/>
</dbReference>
<dbReference type="InterPro" id="IPR001872">
    <property type="entry name" value="Peptidase_A8"/>
</dbReference>
<dbReference type="NCBIfam" id="TIGR00077">
    <property type="entry name" value="lspA"/>
    <property type="match status" value="1"/>
</dbReference>
<dbReference type="PANTHER" id="PTHR33695">
    <property type="entry name" value="LIPOPROTEIN SIGNAL PEPTIDASE"/>
    <property type="match status" value="1"/>
</dbReference>
<dbReference type="PANTHER" id="PTHR33695:SF1">
    <property type="entry name" value="LIPOPROTEIN SIGNAL PEPTIDASE"/>
    <property type="match status" value="1"/>
</dbReference>
<dbReference type="Pfam" id="PF01252">
    <property type="entry name" value="Peptidase_A8"/>
    <property type="match status" value="1"/>
</dbReference>
<dbReference type="PRINTS" id="PR00781">
    <property type="entry name" value="LIPOSIGPTASE"/>
</dbReference>
<dbReference type="PROSITE" id="PS00855">
    <property type="entry name" value="SPASE_II"/>
    <property type="match status" value="1"/>
</dbReference>
<comment type="function">
    <text evidence="1">This protein specifically catalyzes the removal of signal peptides from prolipoproteins.</text>
</comment>
<comment type="catalytic activity">
    <reaction evidence="1">
        <text>Release of signal peptides from bacterial membrane prolipoproteins. Hydrolyzes -Xaa-Yaa-Zaa-|-(S,diacylglyceryl)Cys-, in which Xaa is hydrophobic (preferably Leu), and Yaa (Ala or Ser) and Zaa (Gly or Ala) have small, neutral side chains.</text>
        <dbReference type="EC" id="3.4.23.36"/>
    </reaction>
</comment>
<comment type="pathway">
    <text evidence="1">Protein modification; lipoprotein biosynthesis (signal peptide cleavage).</text>
</comment>
<comment type="subcellular location">
    <subcellularLocation>
        <location evidence="1">Cell inner membrane</location>
        <topology evidence="1">Multi-pass membrane protein</topology>
    </subcellularLocation>
</comment>
<comment type="similarity">
    <text evidence="1">Belongs to the peptidase A8 family.</text>
</comment>
<keyword id="KW-0064">Aspartyl protease</keyword>
<keyword id="KW-0997">Cell inner membrane</keyword>
<keyword id="KW-1003">Cell membrane</keyword>
<keyword id="KW-0378">Hydrolase</keyword>
<keyword id="KW-0472">Membrane</keyword>
<keyword id="KW-0645">Protease</keyword>
<keyword id="KW-1185">Reference proteome</keyword>
<keyword id="KW-0812">Transmembrane</keyword>
<keyword id="KW-1133">Transmembrane helix</keyword>